<dbReference type="EMBL" id="AF474338">
    <property type="protein sequence ID" value="AAL85709.1"/>
    <property type="molecule type" value="Genomic_DNA"/>
</dbReference>
<dbReference type="EMBL" id="AAFI02000103">
    <property type="protein sequence ID" value="EAL63605.1"/>
    <property type="molecule type" value="Genomic_DNA"/>
</dbReference>
<dbReference type="RefSeq" id="XP_637141.1">
    <property type="nucleotide sequence ID" value="XM_632049.1"/>
</dbReference>
<dbReference type="SMR" id="Q8T6H3"/>
<dbReference type="FunCoup" id="Q8T6H3">
    <property type="interactions" value="19"/>
</dbReference>
<dbReference type="STRING" id="44689.Q8T6H3"/>
<dbReference type="PaxDb" id="44689-DDB0219975"/>
<dbReference type="EnsemblProtists" id="EAL63605">
    <property type="protein sequence ID" value="EAL63605"/>
    <property type="gene ID" value="DDB_G0287593"/>
</dbReference>
<dbReference type="GeneID" id="8626236"/>
<dbReference type="KEGG" id="ddi:DDB_G0287593"/>
<dbReference type="dictyBase" id="DDB_G0287593">
    <property type="gene designation" value="abcC6"/>
</dbReference>
<dbReference type="VEuPathDB" id="AmoebaDB:DDB_G0287593"/>
<dbReference type="eggNOG" id="KOG0054">
    <property type="taxonomic scope" value="Eukaryota"/>
</dbReference>
<dbReference type="HOGENOM" id="CLU_000604_27_3_1"/>
<dbReference type="InParanoid" id="Q8T6H3"/>
<dbReference type="OMA" id="FAIRYMI"/>
<dbReference type="PhylomeDB" id="Q8T6H3"/>
<dbReference type="Reactome" id="R-DDI-114608">
    <property type="pathway name" value="Platelet degranulation"/>
</dbReference>
<dbReference type="Reactome" id="R-DDI-382556">
    <property type="pathway name" value="ABC-family proteins mediated transport"/>
</dbReference>
<dbReference type="Reactome" id="R-DDI-8856825">
    <property type="pathway name" value="Cargo recognition for clathrin-mediated endocytosis"/>
</dbReference>
<dbReference type="Reactome" id="R-DDI-8856828">
    <property type="pathway name" value="Clathrin-mediated endocytosis"/>
</dbReference>
<dbReference type="Reactome" id="R-DDI-9646399">
    <property type="pathway name" value="Aggrephagy"/>
</dbReference>
<dbReference type="Reactome" id="R-DDI-9748787">
    <property type="pathway name" value="Azathioprine ADME"/>
</dbReference>
<dbReference type="Reactome" id="R-DDI-9753281">
    <property type="pathway name" value="Paracetamol ADME"/>
</dbReference>
<dbReference type="PRO" id="PR:Q8T6H3"/>
<dbReference type="Proteomes" id="UP000002195">
    <property type="component" value="Chromosome 5"/>
</dbReference>
<dbReference type="GO" id="GO:0016020">
    <property type="term" value="C:membrane"/>
    <property type="evidence" value="ECO:0000318"/>
    <property type="project" value="GO_Central"/>
</dbReference>
<dbReference type="GO" id="GO:0140359">
    <property type="term" value="F:ABC-type transporter activity"/>
    <property type="evidence" value="ECO:0007669"/>
    <property type="project" value="InterPro"/>
</dbReference>
<dbReference type="GO" id="GO:0005524">
    <property type="term" value="F:ATP binding"/>
    <property type="evidence" value="ECO:0007669"/>
    <property type="project" value="UniProtKB-KW"/>
</dbReference>
<dbReference type="GO" id="GO:0016887">
    <property type="term" value="F:ATP hydrolysis activity"/>
    <property type="evidence" value="ECO:0007669"/>
    <property type="project" value="InterPro"/>
</dbReference>
<dbReference type="GO" id="GO:0042626">
    <property type="term" value="F:ATPase-coupled transmembrane transporter activity"/>
    <property type="evidence" value="ECO:0000318"/>
    <property type="project" value="GO_Central"/>
</dbReference>
<dbReference type="GO" id="GO:0031154">
    <property type="term" value="P:culmination involved in sorocarp development"/>
    <property type="evidence" value="ECO:0000315"/>
    <property type="project" value="dictyBase"/>
</dbReference>
<dbReference type="GO" id="GO:0046686">
    <property type="term" value="P:response to cadmium ion"/>
    <property type="evidence" value="ECO:0007007"/>
    <property type="project" value="dictyBase"/>
</dbReference>
<dbReference type="GO" id="GO:0055085">
    <property type="term" value="P:transmembrane transport"/>
    <property type="evidence" value="ECO:0000318"/>
    <property type="project" value="GO_Central"/>
</dbReference>
<dbReference type="CDD" id="cd18579">
    <property type="entry name" value="ABC_6TM_ABCC_D1"/>
    <property type="match status" value="1"/>
</dbReference>
<dbReference type="CDD" id="cd18580">
    <property type="entry name" value="ABC_6TM_ABCC_D2"/>
    <property type="match status" value="1"/>
</dbReference>
<dbReference type="CDD" id="cd03250">
    <property type="entry name" value="ABCC_MRP_domain1"/>
    <property type="match status" value="1"/>
</dbReference>
<dbReference type="CDD" id="cd03244">
    <property type="entry name" value="ABCC_MRP_domain2"/>
    <property type="match status" value="1"/>
</dbReference>
<dbReference type="FunFam" id="1.20.1560.10:FF:000080">
    <property type="entry name" value="ABC transporter C family member 1"/>
    <property type="match status" value="1"/>
</dbReference>
<dbReference type="FunFam" id="3.40.50.300:FF:002822">
    <property type="entry name" value="ABC transporter C family member 7"/>
    <property type="match status" value="1"/>
</dbReference>
<dbReference type="FunFam" id="1.20.1560.10:FF:000010">
    <property type="entry name" value="Multidrug resistance-associated ABC transporter"/>
    <property type="match status" value="1"/>
</dbReference>
<dbReference type="FunFam" id="3.40.50.300:FF:000610">
    <property type="entry name" value="Multidrug resistance-associated ABC transporter"/>
    <property type="match status" value="1"/>
</dbReference>
<dbReference type="Gene3D" id="1.20.1560.10">
    <property type="entry name" value="ABC transporter type 1, transmembrane domain"/>
    <property type="match status" value="2"/>
</dbReference>
<dbReference type="Gene3D" id="3.40.50.300">
    <property type="entry name" value="P-loop containing nucleotide triphosphate hydrolases"/>
    <property type="match status" value="2"/>
</dbReference>
<dbReference type="InterPro" id="IPR003593">
    <property type="entry name" value="AAA+_ATPase"/>
</dbReference>
<dbReference type="InterPro" id="IPR011527">
    <property type="entry name" value="ABC1_TM_dom"/>
</dbReference>
<dbReference type="InterPro" id="IPR036640">
    <property type="entry name" value="ABC1_TM_sf"/>
</dbReference>
<dbReference type="InterPro" id="IPR003439">
    <property type="entry name" value="ABC_transporter-like_ATP-bd"/>
</dbReference>
<dbReference type="InterPro" id="IPR017871">
    <property type="entry name" value="ABC_transporter-like_CS"/>
</dbReference>
<dbReference type="InterPro" id="IPR050173">
    <property type="entry name" value="ABC_transporter_C-like"/>
</dbReference>
<dbReference type="InterPro" id="IPR044746">
    <property type="entry name" value="ABCC_6TM_D1"/>
</dbReference>
<dbReference type="InterPro" id="IPR044726">
    <property type="entry name" value="ABCC_6TM_D2"/>
</dbReference>
<dbReference type="InterPro" id="IPR027417">
    <property type="entry name" value="P-loop_NTPase"/>
</dbReference>
<dbReference type="PANTHER" id="PTHR24223:SF172">
    <property type="entry name" value="ABC TRANSPORTER C FAMILY MEMBER 1-RELATED"/>
    <property type="match status" value="1"/>
</dbReference>
<dbReference type="PANTHER" id="PTHR24223">
    <property type="entry name" value="ATP-BINDING CASSETTE SUB-FAMILY C"/>
    <property type="match status" value="1"/>
</dbReference>
<dbReference type="Pfam" id="PF00664">
    <property type="entry name" value="ABC_membrane"/>
    <property type="match status" value="2"/>
</dbReference>
<dbReference type="Pfam" id="PF00005">
    <property type="entry name" value="ABC_tran"/>
    <property type="match status" value="2"/>
</dbReference>
<dbReference type="SMART" id="SM00382">
    <property type="entry name" value="AAA"/>
    <property type="match status" value="2"/>
</dbReference>
<dbReference type="SUPFAM" id="SSF90123">
    <property type="entry name" value="ABC transporter transmembrane region"/>
    <property type="match status" value="2"/>
</dbReference>
<dbReference type="SUPFAM" id="SSF52540">
    <property type="entry name" value="P-loop containing nucleoside triphosphate hydrolases"/>
    <property type="match status" value="2"/>
</dbReference>
<dbReference type="PROSITE" id="PS50929">
    <property type="entry name" value="ABC_TM1F"/>
    <property type="match status" value="2"/>
</dbReference>
<dbReference type="PROSITE" id="PS00211">
    <property type="entry name" value="ABC_TRANSPORTER_1"/>
    <property type="match status" value="2"/>
</dbReference>
<dbReference type="PROSITE" id="PS50893">
    <property type="entry name" value="ABC_TRANSPORTER_2"/>
    <property type="match status" value="2"/>
</dbReference>
<sequence>MFTKILKKFFSSYEKLKDNEDENEPSSNSTNNFYKTCPEDNSSKWSKISFNWVTKLIMKGYLKESLEMNDIYDLPELNKVQTTSKLLEDIDLSNNSNYTLIKHIYKKFLPKNKYALVSNLFIIIFTFLSPICLKFLINYISIQDENEKSILKGILLCCLLCLCVLGQSISQELFYWFGIKNGFDVRGALAAKIFEKTLKLSNASRKEYKSGKIMNIMSIDVANISEYFWTHHINIVSHFIQILSLVGLLCYVVGPSGLVGFGVMVIALPINAMLCAKSSNYLEKSLEYSDSRTNLTSELITNIRPFKMYAWENFFINKIDGQRKQELKNIFLRIFYSILDHMMIETNATLVLVSTFATYSLNGNTMSLDVTFTAMTIFSKLEVPLIRLPYDIFKAIGLIPSVKRVQNFLKSSESLKYNKNFKNENQKITTTKENNNQHGQDNDIIVENCTFQWNEPENNNIFELNYGDNEEEENQDESINKKENDNEEFNYKLKDINLIVPKGKLTMICGVVGSGKTSLIFGLIGEIYKLNGSVSGVPNNISFTSQQPFLLSASLRENILFGNEFDIERYKKVIESTALTKDIVNLAGLDLTEIGERGINLSGGQKQRISLARALYANSDCFIFDEPLSAVDPEVASHLFDHCIQGELMRNKTRILVTHQLQFIPYADHIIVLNSNGQLIQGTYQELNEKGIDFKSILKTKEIKKNVENETDSEELIKNEIEIENEIIDVNNAISDKNDPNLIEKAKLLVKEDKNEGEVEFNVYKKYFSYGSSGVTLFITISLFFVGQAIFKVSDFWLTIWTERSIEGKSDSFYIGYYLLIFGTFVVILMIRILLLCRITFNVGKNLHSALLKSVTYASCRFFDTNPSGRILNRFSKDTSDIDIHMFDILTEVSMCFSELTIGLISIVFIIPIMVIPLIILSIAYYILQRLYRPSARELNRWESITVSPIFSLLQECYNGLLTIRTYKQESRFIKEMFDNININLGCFFYSFAVHRWVSMRLEVMGWIMVFFTSLIATLFISNNGLAALSVTTALSLNGYLSWGIRRIVDLEVKMNSFQRIQSYIEIPKEGNKLVSTNSNEVDNHTIKDADLVNWPNKGIIEFKNVEIKYRPNSEPNLKDLSFKVQSSEKIGIVGRTGAGKTTIASSLFRMVECSKGLILIDGIDISKVQLQKLRSSIGIVPQDPFIFTGTIRSNIDPFNEFTDFEIWESVEKVKLKDAINSMPLKLETALQENGDNGFSYGQKQLLCLCRTILKNFKIILMDEATSSIDYHTAQLIKQTIQENFKDCTTLTIAHRLETIIDCNKIAVIDSGQLIEFDTPSNLMNIPNSKFNKLIKSQTDYNNNEKTIINK</sequence>
<organism>
    <name type="scientific">Dictyostelium discoideum</name>
    <name type="common">Social amoeba</name>
    <dbReference type="NCBI Taxonomy" id="44689"/>
    <lineage>
        <taxon>Eukaryota</taxon>
        <taxon>Amoebozoa</taxon>
        <taxon>Evosea</taxon>
        <taxon>Eumycetozoa</taxon>
        <taxon>Dictyostelia</taxon>
        <taxon>Dictyosteliales</taxon>
        <taxon>Dictyosteliaceae</taxon>
        <taxon>Dictyostelium</taxon>
    </lineage>
</organism>
<evidence type="ECO:0000255" key="1"/>
<evidence type="ECO:0000255" key="2">
    <source>
        <dbReference type="PROSITE-ProRule" id="PRU00434"/>
    </source>
</evidence>
<evidence type="ECO:0000255" key="3">
    <source>
        <dbReference type="PROSITE-ProRule" id="PRU00441"/>
    </source>
</evidence>
<evidence type="ECO:0000305" key="4"/>
<accession>Q8T6H3</accession>
<accession>Q54K23</accession>
<reference key="1">
    <citation type="journal article" date="2002" name="Eukaryot. Cell">
        <title>Evolutionary analyses of ABC transporters of Dictyostelium discoideum.</title>
        <authorList>
            <person name="Anjard C."/>
            <person name="Loomis W.F."/>
        </authorList>
    </citation>
    <scope>NUCLEOTIDE SEQUENCE [GENOMIC DNA]</scope>
    <scope>NOMENCLATURE</scope>
    <source>
        <strain>AX4</strain>
    </source>
</reference>
<reference key="2">
    <citation type="journal article" date="2005" name="Nature">
        <title>The genome of the social amoeba Dictyostelium discoideum.</title>
        <authorList>
            <person name="Eichinger L."/>
            <person name="Pachebat J.A."/>
            <person name="Gloeckner G."/>
            <person name="Rajandream M.A."/>
            <person name="Sucgang R."/>
            <person name="Berriman M."/>
            <person name="Song J."/>
            <person name="Olsen R."/>
            <person name="Szafranski K."/>
            <person name="Xu Q."/>
            <person name="Tunggal B."/>
            <person name="Kummerfeld S."/>
            <person name="Madera M."/>
            <person name="Konfortov B.A."/>
            <person name="Rivero F."/>
            <person name="Bankier A.T."/>
            <person name="Lehmann R."/>
            <person name="Hamlin N."/>
            <person name="Davies R."/>
            <person name="Gaudet P."/>
            <person name="Fey P."/>
            <person name="Pilcher K."/>
            <person name="Chen G."/>
            <person name="Saunders D."/>
            <person name="Sodergren E.J."/>
            <person name="Davis P."/>
            <person name="Kerhornou A."/>
            <person name="Nie X."/>
            <person name="Hall N."/>
            <person name="Anjard C."/>
            <person name="Hemphill L."/>
            <person name="Bason N."/>
            <person name="Farbrother P."/>
            <person name="Desany B."/>
            <person name="Just E."/>
            <person name="Morio T."/>
            <person name="Rost R."/>
            <person name="Churcher C.M."/>
            <person name="Cooper J."/>
            <person name="Haydock S."/>
            <person name="van Driessche N."/>
            <person name="Cronin A."/>
            <person name="Goodhead I."/>
            <person name="Muzny D.M."/>
            <person name="Mourier T."/>
            <person name="Pain A."/>
            <person name="Lu M."/>
            <person name="Harper D."/>
            <person name="Lindsay R."/>
            <person name="Hauser H."/>
            <person name="James K.D."/>
            <person name="Quiles M."/>
            <person name="Madan Babu M."/>
            <person name="Saito T."/>
            <person name="Buchrieser C."/>
            <person name="Wardroper A."/>
            <person name="Felder M."/>
            <person name="Thangavelu M."/>
            <person name="Johnson D."/>
            <person name="Knights A."/>
            <person name="Loulseged H."/>
            <person name="Mungall K.L."/>
            <person name="Oliver K."/>
            <person name="Price C."/>
            <person name="Quail M.A."/>
            <person name="Urushihara H."/>
            <person name="Hernandez J."/>
            <person name="Rabbinowitsch E."/>
            <person name="Steffen D."/>
            <person name="Sanders M."/>
            <person name="Ma J."/>
            <person name="Kohara Y."/>
            <person name="Sharp S."/>
            <person name="Simmonds M.N."/>
            <person name="Spiegler S."/>
            <person name="Tivey A."/>
            <person name="Sugano S."/>
            <person name="White B."/>
            <person name="Walker D."/>
            <person name="Woodward J.R."/>
            <person name="Winckler T."/>
            <person name="Tanaka Y."/>
            <person name="Shaulsky G."/>
            <person name="Schleicher M."/>
            <person name="Weinstock G.M."/>
            <person name="Rosenthal A."/>
            <person name="Cox E.C."/>
            <person name="Chisholm R.L."/>
            <person name="Gibbs R.A."/>
            <person name="Loomis W.F."/>
            <person name="Platzer M."/>
            <person name="Kay R.R."/>
            <person name="Williams J.G."/>
            <person name="Dear P.H."/>
            <person name="Noegel A.A."/>
            <person name="Barrell B.G."/>
            <person name="Kuspa A."/>
        </authorList>
    </citation>
    <scope>NUCLEOTIDE SEQUENCE [LARGE SCALE GENOMIC DNA]</scope>
    <source>
        <strain>AX4</strain>
    </source>
</reference>
<keyword id="KW-0067">ATP-binding</keyword>
<keyword id="KW-0175">Coiled coil</keyword>
<keyword id="KW-0472">Membrane</keyword>
<keyword id="KW-0547">Nucleotide-binding</keyword>
<keyword id="KW-1185">Reference proteome</keyword>
<keyword id="KW-0677">Repeat</keyword>
<keyword id="KW-0812">Transmembrane</keyword>
<keyword id="KW-1133">Transmembrane helix</keyword>
<keyword id="KW-0813">Transport</keyword>
<gene>
    <name type="primary">abcC6</name>
    <name type="ORF">DDB_G0287593</name>
</gene>
<proteinExistence type="inferred from homology"/>
<name>ABCC6_DICDI</name>
<feature type="chain" id="PRO_0000363851" description="ABC transporter C family member 6">
    <location>
        <begin position="1"/>
        <end position="1351"/>
    </location>
</feature>
<feature type="transmembrane region" description="Helical" evidence="3">
    <location>
        <begin position="120"/>
        <end position="140"/>
    </location>
</feature>
<feature type="transmembrane region" description="Helical" evidence="3">
    <location>
        <begin position="149"/>
        <end position="169"/>
    </location>
</feature>
<feature type="transmembrane region" description="Helical" evidence="3">
    <location>
        <begin position="248"/>
        <end position="268"/>
    </location>
</feature>
<feature type="transmembrane region" description="Helical" evidence="3">
    <location>
        <begin position="771"/>
        <end position="791"/>
    </location>
</feature>
<feature type="transmembrane region" description="Helical" evidence="3">
    <location>
        <begin position="815"/>
        <end position="835"/>
    </location>
</feature>
<feature type="transmembrane region" description="Helical" evidence="3">
    <location>
        <begin position="904"/>
        <end position="924"/>
    </location>
</feature>
<feature type="transmembrane region" description="Helical" evidence="3">
    <location>
        <begin position="977"/>
        <end position="999"/>
    </location>
</feature>
<feature type="transmembrane region" description="Helical" evidence="3">
    <location>
        <begin position="1002"/>
        <end position="1022"/>
    </location>
</feature>
<feature type="transmembrane region" description="Helical" evidence="3">
    <location>
        <begin position="1025"/>
        <end position="1045"/>
    </location>
</feature>
<feature type="domain" description="ABC transmembrane type-1 1" evidence="3">
    <location>
        <begin position="112"/>
        <end position="397"/>
    </location>
</feature>
<feature type="domain" description="ABC transporter 1" evidence="2">
    <location>
        <begin position="474"/>
        <end position="700"/>
    </location>
</feature>
<feature type="domain" description="ABC transmembrane type-1 2" evidence="3">
    <location>
        <begin position="777"/>
        <end position="1060"/>
    </location>
</feature>
<feature type="domain" description="ABC transporter 2" evidence="2">
    <location>
        <begin position="1101"/>
        <end position="1336"/>
    </location>
</feature>
<feature type="coiled-coil region" evidence="1">
    <location>
        <begin position="701"/>
        <end position="734"/>
    </location>
</feature>
<feature type="binding site" evidence="2">
    <location>
        <begin position="510"/>
        <end position="517"/>
    </location>
    <ligand>
        <name>ATP</name>
        <dbReference type="ChEBI" id="CHEBI:30616"/>
    </ligand>
</feature>
<feature type="binding site" evidence="2">
    <location>
        <begin position="1135"/>
        <end position="1142"/>
    </location>
    <ligand>
        <name>ATP</name>
        <dbReference type="ChEBI" id="CHEBI:30616"/>
    </ligand>
</feature>
<comment type="subcellular location">
    <subcellularLocation>
        <location evidence="3">Membrane</location>
        <topology evidence="3">Multi-pass membrane protein</topology>
    </subcellularLocation>
</comment>
<comment type="similarity">
    <text evidence="4">Belongs to the ABC transporter superfamily. ABCC family. Conjugate transporter (TC 3.A.1.208) subfamily.</text>
</comment>
<protein>
    <recommendedName>
        <fullName>ABC transporter C family member 6</fullName>
    </recommendedName>
    <alternativeName>
        <fullName>ABC transporter ABCC.6</fullName>
    </alternativeName>
</protein>